<protein>
    <recommendedName>
        <fullName evidence="1">Protein Smg homolog</fullName>
    </recommendedName>
</protein>
<name>SMG_SHEDO</name>
<keyword id="KW-1185">Reference proteome</keyword>
<gene>
    <name evidence="1" type="primary">smg</name>
    <name type="ordered locus">Sden_0027</name>
</gene>
<proteinExistence type="inferred from homology"/>
<accession>Q12TA2</accession>
<reference key="1">
    <citation type="submission" date="2006-03" db="EMBL/GenBank/DDBJ databases">
        <title>Complete sequence of Shewanella denitrificans OS217.</title>
        <authorList>
            <consortium name="US DOE Joint Genome Institute"/>
            <person name="Copeland A."/>
            <person name="Lucas S."/>
            <person name="Lapidus A."/>
            <person name="Barry K."/>
            <person name="Detter J.C."/>
            <person name="Glavina del Rio T."/>
            <person name="Hammon N."/>
            <person name="Israni S."/>
            <person name="Dalin E."/>
            <person name="Tice H."/>
            <person name="Pitluck S."/>
            <person name="Brettin T."/>
            <person name="Bruce D."/>
            <person name="Han C."/>
            <person name="Tapia R."/>
            <person name="Gilna P."/>
            <person name="Kiss H."/>
            <person name="Schmutz J."/>
            <person name="Larimer F."/>
            <person name="Land M."/>
            <person name="Hauser L."/>
            <person name="Kyrpides N."/>
            <person name="Lykidis A."/>
            <person name="Richardson P."/>
        </authorList>
    </citation>
    <scope>NUCLEOTIDE SEQUENCE [LARGE SCALE GENOMIC DNA]</scope>
    <source>
        <strain>OS217 / ATCC BAA-1090 / DSM 15013</strain>
    </source>
</reference>
<dbReference type="EMBL" id="CP000302">
    <property type="protein sequence ID" value="ABE53324.1"/>
    <property type="molecule type" value="Genomic_DNA"/>
</dbReference>
<dbReference type="RefSeq" id="WP_011494493.1">
    <property type="nucleotide sequence ID" value="NC_007954.1"/>
</dbReference>
<dbReference type="SMR" id="Q12TA2"/>
<dbReference type="STRING" id="318161.Sden_0027"/>
<dbReference type="KEGG" id="sdn:Sden_0027"/>
<dbReference type="eggNOG" id="COG2922">
    <property type="taxonomic scope" value="Bacteria"/>
</dbReference>
<dbReference type="HOGENOM" id="CLU_133242_0_0_6"/>
<dbReference type="OrthoDB" id="9788984at2"/>
<dbReference type="Proteomes" id="UP000001982">
    <property type="component" value="Chromosome"/>
</dbReference>
<dbReference type="HAMAP" id="MF_00598">
    <property type="entry name" value="Smg"/>
    <property type="match status" value="1"/>
</dbReference>
<dbReference type="InterPro" id="IPR007456">
    <property type="entry name" value="Smg"/>
</dbReference>
<dbReference type="NCBIfam" id="NF002897">
    <property type="entry name" value="PRK03430.1"/>
    <property type="match status" value="1"/>
</dbReference>
<dbReference type="PANTHER" id="PTHR38692">
    <property type="entry name" value="PROTEIN SMG"/>
    <property type="match status" value="1"/>
</dbReference>
<dbReference type="PANTHER" id="PTHR38692:SF1">
    <property type="entry name" value="PROTEIN SMG"/>
    <property type="match status" value="1"/>
</dbReference>
<dbReference type="Pfam" id="PF04361">
    <property type="entry name" value="DUF494"/>
    <property type="match status" value="1"/>
</dbReference>
<feature type="chain" id="PRO_1000025665" description="Protein Smg homolog">
    <location>
        <begin position="1"/>
        <end position="157"/>
    </location>
</feature>
<comment type="similarity">
    <text evidence="1">Belongs to the Smg family.</text>
</comment>
<sequence>MFDILMYLFENYVHSEIELLVDEDELTKELTRAGFHQADILKALSWLERLADLQESDKPYLCNHAQQSFRIYTKDEMAKLDVESRGFLLFLEQIQVLSVETREMVIDRVMELDEASLILDDLKWVILMVLFNVPGNESAYEQMEDLIFEQPEGRLHS</sequence>
<organism>
    <name type="scientific">Shewanella denitrificans (strain OS217 / ATCC BAA-1090 / DSM 15013)</name>
    <dbReference type="NCBI Taxonomy" id="318161"/>
    <lineage>
        <taxon>Bacteria</taxon>
        <taxon>Pseudomonadati</taxon>
        <taxon>Pseudomonadota</taxon>
        <taxon>Gammaproteobacteria</taxon>
        <taxon>Alteromonadales</taxon>
        <taxon>Shewanellaceae</taxon>
        <taxon>Shewanella</taxon>
    </lineage>
</organism>
<evidence type="ECO:0000255" key="1">
    <source>
        <dbReference type="HAMAP-Rule" id="MF_00598"/>
    </source>
</evidence>